<protein>
    <recommendedName>
        <fullName evidence="1">Leucyl/phenylalanyl-tRNA--protein transferase</fullName>
        <ecNumber evidence="1">2.3.2.6</ecNumber>
    </recommendedName>
    <alternativeName>
        <fullName evidence="1">L/F-transferase</fullName>
    </alternativeName>
    <alternativeName>
        <fullName evidence="1">Leucyltransferase</fullName>
    </alternativeName>
    <alternativeName>
        <fullName evidence="1">Phenyalanyltransferase</fullName>
    </alternativeName>
</protein>
<accession>Q9JX50</accession>
<accession>A1INS6</accession>
<gene>
    <name evidence="1" type="primary">aat</name>
    <name type="ordered locus">NMA0063</name>
</gene>
<reference key="1">
    <citation type="journal article" date="2000" name="Nature">
        <title>Complete DNA sequence of a serogroup A strain of Neisseria meningitidis Z2491.</title>
        <authorList>
            <person name="Parkhill J."/>
            <person name="Achtman M."/>
            <person name="James K.D."/>
            <person name="Bentley S.D."/>
            <person name="Churcher C.M."/>
            <person name="Klee S.R."/>
            <person name="Morelli G."/>
            <person name="Basham D."/>
            <person name="Brown D."/>
            <person name="Chillingworth T."/>
            <person name="Davies R.M."/>
            <person name="Davis P."/>
            <person name="Devlin K."/>
            <person name="Feltwell T."/>
            <person name="Hamlin N."/>
            <person name="Holroyd S."/>
            <person name="Jagels K."/>
            <person name="Leather S."/>
            <person name="Moule S."/>
            <person name="Mungall K.L."/>
            <person name="Quail M.A."/>
            <person name="Rajandream M.A."/>
            <person name="Rutherford K.M."/>
            <person name="Simmonds M."/>
            <person name="Skelton J."/>
            <person name="Whitehead S."/>
            <person name="Spratt B.G."/>
            <person name="Barrell B.G."/>
        </authorList>
    </citation>
    <scope>NUCLEOTIDE SEQUENCE [LARGE SCALE GENOMIC DNA]</scope>
    <source>
        <strain>DSM 15465 / Z2491</strain>
    </source>
</reference>
<keyword id="KW-0012">Acyltransferase</keyword>
<keyword id="KW-0963">Cytoplasm</keyword>
<keyword id="KW-0808">Transferase</keyword>
<dbReference type="EC" id="2.3.2.6" evidence="1"/>
<dbReference type="EMBL" id="AL157959">
    <property type="protein sequence ID" value="CAM07383.1"/>
    <property type="molecule type" value="Genomic_DNA"/>
</dbReference>
<dbReference type="PIR" id="F81997">
    <property type="entry name" value="F81997"/>
</dbReference>
<dbReference type="RefSeq" id="WP_002246766.1">
    <property type="nucleotide sequence ID" value="NC_003116.1"/>
</dbReference>
<dbReference type="SMR" id="Q9JX50"/>
<dbReference type="EnsemblBacteria" id="CAM07383">
    <property type="protein sequence ID" value="CAM07383"/>
    <property type="gene ID" value="NMA0063"/>
</dbReference>
<dbReference type="GeneID" id="93387284"/>
<dbReference type="KEGG" id="nma:NMA0063"/>
<dbReference type="HOGENOM" id="CLU_075045_0_0_4"/>
<dbReference type="Proteomes" id="UP000000626">
    <property type="component" value="Chromosome"/>
</dbReference>
<dbReference type="GO" id="GO:0005737">
    <property type="term" value="C:cytoplasm"/>
    <property type="evidence" value="ECO:0007669"/>
    <property type="project" value="UniProtKB-SubCell"/>
</dbReference>
<dbReference type="GO" id="GO:0008914">
    <property type="term" value="F:leucyl-tRNA--protein transferase activity"/>
    <property type="evidence" value="ECO:0007669"/>
    <property type="project" value="UniProtKB-UniRule"/>
</dbReference>
<dbReference type="GO" id="GO:0030163">
    <property type="term" value="P:protein catabolic process"/>
    <property type="evidence" value="ECO:0007669"/>
    <property type="project" value="UniProtKB-UniRule"/>
</dbReference>
<dbReference type="FunFam" id="3.40.630.70:FF:000004">
    <property type="entry name" value="Leucyl/phenylalanyl-tRNA--protein transferase"/>
    <property type="match status" value="1"/>
</dbReference>
<dbReference type="Gene3D" id="3.40.630.70">
    <property type="entry name" value="Leucyl/phenylalanyl-tRNA-protein transferase, C-terminal domain"/>
    <property type="match status" value="1"/>
</dbReference>
<dbReference type="Gene3D" id="3.30.70.3550">
    <property type="entry name" value="Leucyl/phenylalanyl-tRNA-protein transferase, N-terminal domain"/>
    <property type="match status" value="1"/>
</dbReference>
<dbReference type="HAMAP" id="MF_00688">
    <property type="entry name" value="Leu_Phe_trans"/>
    <property type="match status" value="1"/>
</dbReference>
<dbReference type="InterPro" id="IPR016181">
    <property type="entry name" value="Acyl_CoA_acyltransferase"/>
</dbReference>
<dbReference type="InterPro" id="IPR004616">
    <property type="entry name" value="Leu/Phe-tRNA_Trfase"/>
</dbReference>
<dbReference type="InterPro" id="IPR042203">
    <property type="entry name" value="Leu/Phe-tRNA_Trfase_C"/>
</dbReference>
<dbReference type="InterPro" id="IPR042221">
    <property type="entry name" value="Leu/Phe-tRNA_Trfase_N"/>
</dbReference>
<dbReference type="NCBIfam" id="TIGR00667">
    <property type="entry name" value="aat"/>
    <property type="match status" value="1"/>
</dbReference>
<dbReference type="PANTHER" id="PTHR30098">
    <property type="entry name" value="LEUCYL/PHENYLALANYL-TRNA--PROTEIN TRANSFERASE"/>
    <property type="match status" value="1"/>
</dbReference>
<dbReference type="PANTHER" id="PTHR30098:SF2">
    <property type="entry name" value="LEUCYL_PHENYLALANYL-TRNA--PROTEIN TRANSFERASE"/>
    <property type="match status" value="1"/>
</dbReference>
<dbReference type="Pfam" id="PF03588">
    <property type="entry name" value="Leu_Phe_trans"/>
    <property type="match status" value="1"/>
</dbReference>
<dbReference type="SUPFAM" id="SSF55729">
    <property type="entry name" value="Acyl-CoA N-acyltransferases (Nat)"/>
    <property type="match status" value="1"/>
</dbReference>
<evidence type="ECO:0000255" key="1">
    <source>
        <dbReference type="HAMAP-Rule" id="MF_00688"/>
    </source>
</evidence>
<feature type="chain" id="PRO_0000207229" description="Leucyl/phenylalanyl-tRNA--protein transferase">
    <location>
        <begin position="1"/>
        <end position="241"/>
    </location>
</feature>
<comment type="function">
    <text evidence="1">Functions in the N-end rule pathway of protein degradation where it conjugates Leu, Phe and, less efficiently, Met from aminoacyl-tRNAs to the N-termini of proteins containing an N-terminal arginine or lysine.</text>
</comment>
<comment type="catalytic activity">
    <reaction evidence="1">
        <text>N-terminal L-lysyl-[protein] + L-leucyl-tRNA(Leu) = N-terminal L-leucyl-L-lysyl-[protein] + tRNA(Leu) + H(+)</text>
        <dbReference type="Rhea" id="RHEA:12340"/>
        <dbReference type="Rhea" id="RHEA-COMP:9613"/>
        <dbReference type="Rhea" id="RHEA-COMP:9622"/>
        <dbReference type="Rhea" id="RHEA-COMP:12670"/>
        <dbReference type="Rhea" id="RHEA-COMP:12671"/>
        <dbReference type="ChEBI" id="CHEBI:15378"/>
        <dbReference type="ChEBI" id="CHEBI:65249"/>
        <dbReference type="ChEBI" id="CHEBI:78442"/>
        <dbReference type="ChEBI" id="CHEBI:78494"/>
        <dbReference type="ChEBI" id="CHEBI:133043"/>
        <dbReference type="EC" id="2.3.2.6"/>
    </reaction>
</comment>
<comment type="catalytic activity">
    <reaction evidence="1">
        <text>N-terminal L-arginyl-[protein] + L-leucyl-tRNA(Leu) = N-terminal L-leucyl-L-arginyl-[protein] + tRNA(Leu) + H(+)</text>
        <dbReference type="Rhea" id="RHEA:50416"/>
        <dbReference type="Rhea" id="RHEA-COMP:9613"/>
        <dbReference type="Rhea" id="RHEA-COMP:9622"/>
        <dbReference type="Rhea" id="RHEA-COMP:12672"/>
        <dbReference type="Rhea" id="RHEA-COMP:12673"/>
        <dbReference type="ChEBI" id="CHEBI:15378"/>
        <dbReference type="ChEBI" id="CHEBI:64719"/>
        <dbReference type="ChEBI" id="CHEBI:78442"/>
        <dbReference type="ChEBI" id="CHEBI:78494"/>
        <dbReference type="ChEBI" id="CHEBI:133044"/>
        <dbReference type="EC" id="2.3.2.6"/>
    </reaction>
</comment>
<comment type="catalytic activity">
    <reaction evidence="1">
        <text>L-phenylalanyl-tRNA(Phe) + an N-terminal L-alpha-aminoacyl-[protein] = an N-terminal L-phenylalanyl-L-alpha-aminoacyl-[protein] + tRNA(Phe)</text>
        <dbReference type="Rhea" id="RHEA:43632"/>
        <dbReference type="Rhea" id="RHEA-COMP:9668"/>
        <dbReference type="Rhea" id="RHEA-COMP:9699"/>
        <dbReference type="Rhea" id="RHEA-COMP:10636"/>
        <dbReference type="Rhea" id="RHEA-COMP:10637"/>
        <dbReference type="ChEBI" id="CHEBI:78442"/>
        <dbReference type="ChEBI" id="CHEBI:78531"/>
        <dbReference type="ChEBI" id="CHEBI:78597"/>
        <dbReference type="ChEBI" id="CHEBI:83561"/>
        <dbReference type="EC" id="2.3.2.6"/>
    </reaction>
</comment>
<comment type="subcellular location">
    <subcellularLocation>
        <location evidence="1">Cytoplasm</location>
    </subcellularLocation>
</comment>
<comment type="similarity">
    <text evidence="1">Belongs to the L/F-transferase family.</text>
</comment>
<name>LFTR_NEIMA</name>
<organism>
    <name type="scientific">Neisseria meningitidis serogroup A / serotype 4A (strain DSM 15465 / Z2491)</name>
    <dbReference type="NCBI Taxonomy" id="122587"/>
    <lineage>
        <taxon>Bacteria</taxon>
        <taxon>Pseudomonadati</taxon>
        <taxon>Pseudomonadota</taxon>
        <taxon>Betaproteobacteria</taxon>
        <taxon>Neisseriales</taxon>
        <taxon>Neisseriaceae</taxon>
        <taxon>Neisseria</taxon>
    </lineage>
</organism>
<sequence length="241" mass="26831">MRIPLLAPDNYAFPDPAYALAWCDGLVGVSGDLDAGRLLEAYQNGVFPWFLRDGWFFWYAVGPRAVIVPERLHVPCSLAKTLRNGSYRVAVNGCFAEVVAHCAAAARPNQDGTWIAPEFQTAYLKLHEMGYAHSFECHYPDENGKTRLAGGFYGVQIGRVFYGESMFALQPDASKIAFACAVPFLADLGVELIDCQQDTEHMRRFGSELLPFADFAERLRMLNAVPLKEEIGRREVACRGL</sequence>
<proteinExistence type="inferred from homology"/>